<evidence type="ECO:0000255" key="1">
    <source>
        <dbReference type="HAMAP-Rule" id="MF_00433"/>
    </source>
</evidence>
<reference key="1">
    <citation type="journal article" date="2004" name="Mol. Biol. Evol.">
        <title>Chloroplast phylogeny indicates that bryophytes are monophyletic.</title>
        <authorList>
            <person name="Nishiyama T."/>
            <person name="Wolf P.G."/>
            <person name="Kugita M."/>
            <person name="Sinclair R.B."/>
            <person name="Sugita M."/>
            <person name="Sugiura C."/>
            <person name="Wakasugi T."/>
            <person name="Yamada K."/>
            <person name="Yoshinaga K."/>
            <person name="Yamaguchi K."/>
            <person name="Ueda K."/>
            <person name="Hasebe M."/>
        </authorList>
    </citation>
    <scope>NUCLEOTIDE SEQUENCE [LARGE SCALE GENOMIC DNA]</scope>
    <source>
        <strain>Kingyoku</strain>
    </source>
</reference>
<comment type="function">
    <text evidence="1">Component of the cytochrome b6-f complex, which mediates electron transfer between photosystem II (PSII) and photosystem I (PSI), cyclic electron flow around PSI, and state transitions. PetL is important for photoautotrophic growth as well as for electron transfer efficiency and stability of the cytochrome b6-f complex.</text>
</comment>
<comment type="subunit">
    <text evidence="1">The 4 large subunits of the cytochrome b6-f complex are cytochrome b6, subunit IV (17 kDa polypeptide, PetD), cytochrome f and the Rieske protein, while the 4 small subunits are PetG, PetL, PetM and PetN. The complex functions as a dimer.</text>
</comment>
<comment type="subcellular location">
    <subcellularLocation>
        <location evidence="1">Plastid</location>
        <location evidence="1">Chloroplast thylakoid membrane</location>
        <topology evidence="1">Single-pass membrane protein</topology>
    </subcellularLocation>
</comment>
<comment type="similarity">
    <text evidence="1">Belongs to the PetL family.</text>
</comment>
<proteinExistence type="inferred from homology"/>
<feature type="chain" id="PRO_0000220474" description="Cytochrome b6-f complex subunit 6">
    <location>
        <begin position="1"/>
        <end position="31"/>
    </location>
</feature>
<feature type="transmembrane region" description="Helical" evidence="1">
    <location>
        <begin position="4"/>
        <end position="24"/>
    </location>
</feature>
<dbReference type="EMBL" id="AP004638">
    <property type="protein sequence ID" value="BAB84234.1"/>
    <property type="molecule type" value="Genomic_DNA"/>
</dbReference>
<dbReference type="RefSeq" id="NP_569647.1">
    <property type="nucleotide sequence ID" value="NC_003386.1"/>
</dbReference>
<dbReference type="SMR" id="Q8WI03"/>
<dbReference type="GeneID" id="2545131"/>
<dbReference type="GO" id="GO:0009535">
    <property type="term" value="C:chloroplast thylakoid membrane"/>
    <property type="evidence" value="ECO:0007669"/>
    <property type="project" value="UniProtKB-SubCell"/>
</dbReference>
<dbReference type="GO" id="GO:0009512">
    <property type="term" value="C:cytochrome b6f complex"/>
    <property type="evidence" value="ECO:0007669"/>
    <property type="project" value="InterPro"/>
</dbReference>
<dbReference type="GO" id="GO:0045158">
    <property type="term" value="F:electron transporter, transferring electrons within cytochrome b6/f complex of photosystem II activity"/>
    <property type="evidence" value="ECO:0007669"/>
    <property type="project" value="UniProtKB-UniRule"/>
</dbReference>
<dbReference type="GO" id="GO:0015979">
    <property type="term" value="P:photosynthesis"/>
    <property type="evidence" value="ECO:0007669"/>
    <property type="project" value="UniProtKB-KW"/>
</dbReference>
<dbReference type="HAMAP" id="MF_00433">
    <property type="entry name" value="Cytb6_f_PetL"/>
    <property type="match status" value="1"/>
</dbReference>
<dbReference type="InterPro" id="IPR007802">
    <property type="entry name" value="Cyt_b6/f_cplx_su6"/>
</dbReference>
<dbReference type="PANTHER" id="PTHR37266">
    <property type="entry name" value="CYTOCHROME B6-F COMPLEX SUBUNIT 6"/>
    <property type="match status" value="1"/>
</dbReference>
<dbReference type="PANTHER" id="PTHR37266:SF1">
    <property type="entry name" value="CYTOCHROME B6-F COMPLEX SUBUNIT 6"/>
    <property type="match status" value="1"/>
</dbReference>
<dbReference type="Pfam" id="PF05115">
    <property type="entry name" value="PetL"/>
    <property type="match status" value="1"/>
</dbReference>
<dbReference type="SUPFAM" id="SSF103436">
    <property type="entry name" value="PetL subunit of the cytochrome b6f complex"/>
    <property type="match status" value="1"/>
</dbReference>
<accession>Q8WI03</accession>
<name>PETL_PSINU</name>
<geneLocation type="chloroplast"/>
<organism>
    <name type="scientific">Psilotum nudum</name>
    <name type="common">Whisk fern</name>
    <name type="synonym">Lycopodium nudum</name>
    <dbReference type="NCBI Taxonomy" id="3240"/>
    <lineage>
        <taxon>Eukaryota</taxon>
        <taxon>Viridiplantae</taxon>
        <taxon>Streptophyta</taxon>
        <taxon>Embryophyta</taxon>
        <taxon>Tracheophyta</taxon>
        <taxon>Polypodiopsida</taxon>
        <taxon>Ophioglossidae</taxon>
        <taxon>Psilotales</taxon>
        <taxon>Psilotaceae</taxon>
        <taxon>Psilotum</taxon>
    </lineage>
</organism>
<gene>
    <name evidence="1" type="primary">petL</name>
</gene>
<keyword id="KW-0150">Chloroplast</keyword>
<keyword id="KW-0249">Electron transport</keyword>
<keyword id="KW-0472">Membrane</keyword>
<keyword id="KW-0602">Photosynthesis</keyword>
<keyword id="KW-0934">Plastid</keyword>
<keyword id="KW-0793">Thylakoid</keyword>
<keyword id="KW-0812">Transmembrane</keyword>
<keyword id="KW-1133">Transmembrane helix</keyword>
<keyword id="KW-0813">Transport</keyword>
<sequence length="31" mass="3392">MLTLLSYFGLLLAALISTLVLFIGLNKVKLI</sequence>
<protein>
    <recommendedName>
        <fullName evidence="1">Cytochrome b6-f complex subunit 6</fullName>
    </recommendedName>
    <alternativeName>
        <fullName evidence="1">Cytochrome b6-f complex subunit PetL</fullName>
    </alternativeName>
    <alternativeName>
        <fullName evidence="1">Cytochrome b6-f complex subunit VI</fullName>
    </alternativeName>
</protein>